<proteinExistence type="inferred from homology"/>
<comment type="function">
    <text evidence="1">Catalyzes the reduction of hydroxylamine to form NH(3) and H(2)O.</text>
</comment>
<comment type="catalytic activity">
    <reaction evidence="1">
        <text>A + NH4(+) + H2O = hydroxylamine + AH2 + H(+)</text>
        <dbReference type="Rhea" id="RHEA:22052"/>
        <dbReference type="ChEBI" id="CHEBI:13193"/>
        <dbReference type="ChEBI" id="CHEBI:15377"/>
        <dbReference type="ChEBI" id="CHEBI:15378"/>
        <dbReference type="ChEBI" id="CHEBI:15429"/>
        <dbReference type="ChEBI" id="CHEBI:17499"/>
        <dbReference type="ChEBI" id="CHEBI:28938"/>
        <dbReference type="EC" id="1.7.99.1"/>
    </reaction>
</comment>
<comment type="cofactor">
    <cofactor evidence="1">
        <name>[4Fe-4S] cluster</name>
        <dbReference type="ChEBI" id="CHEBI:49883"/>
    </cofactor>
    <text evidence="1">Binds 1 [4Fe-4S] cluster.</text>
</comment>
<comment type="cofactor">
    <cofactor evidence="1">
        <name>hybrid [4Fe-2O-2S] cluster</name>
        <dbReference type="ChEBI" id="CHEBI:60519"/>
    </cofactor>
    <text evidence="1">Binds 1 hybrid [4Fe-2O-2S] cluster.</text>
</comment>
<comment type="subcellular location">
    <subcellularLocation>
        <location evidence="1">Cytoplasm</location>
    </subcellularLocation>
</comment>
<comment type="similarity">
    <text evidence="1">Belongs to the HCP family.</text>
</comment>
<organism>
    <name type="scientific">Thermodesulfovibrio yellowstonii (strain ATCC 51303 / DSM 11347 / YP87)</name>
    <dbReference type="NCBI Taxonomy" id="289376"/>
    <lineage>
        <taxon>Bacteria</taxon>
        <taxon>Pseudomonadati</taxon>
        <taxon>Nitrospirota</taxon>
        <taxon>Thermodesulfovibrionia</taxon>
        <taxon>Thermodesulfovibrionales</taxon>
        <taxon>Thermodesulfovibrionaceae</taxon>
        <taxon>Thermodesulfovibrio</taxon>
    </lineage>
</organism>
<feature type="chain" id="PRO_1000092356" description="Hydroxylamine reductase">
    <location>
        <begin position="1"/>
        <end position="539"/>
    </location>
</feature>
<feature type="binding site" evidence="1">
    <location>
        <position position="3"/>
    </location>
    <ligand>
        <name>[4Fe-4S] cluster</name>
        <dbReference type="ChEBI" id="CHEBI:49883"/>
    </ligand>
</feature>
<feature type="binding site" evidence="1">
    <location>
        <position position="6"/>
    </location>
    <ligand>
        <name>[4Fe-4S] cluster</name>
        <dbReference type="ChEBI" id="CHEBI:49883"/>
    </ligand>
</feature>
<feature type="binding site" evidence="1">
    <location>
        <position position="13"/>
    </location>
    <ligand>
        <name>[4Fe-4S] cluster</name>
        <dbReference type="ChEBI" id="CHEBI:49883"/>
    </ligand>
</feature>
<feature type="binding site" evidence="1">
    <location>
        <position position="19"/>
    </location>
    <ligand>
        <name>[4Fe-4S] cluster</name>
        <dbReference type="ChEBI" id="CHEBI:49883"/>
    </ligand>
</feature>
<feature type="binding site" evidence="1">
    <location>
        <position position="240"/>
    </location>
    <ligand>
        <name>hybrid [4Fe-2O-2S] cluster</name>
        <dbReference type="ChEBI" id="CHEBI:60519"/>
    </ligand>
</feature>
<feature type="binding site" evidence="1">
    <location>
        <position position="264"/>
    </location>
    <ligand>
        <name>hybrid [4Fe-2O-2S] cluster</name>
        <dbReference type="ChEBI" id="CHEBI:60519"/>
    </ligand>
</feature>
<feature type="binding site" evidence="1">
    <location>
        <position position="308"/>
    </location>
    <ligand>
        <name>hybrid [4Fe-2O-2S] cluster</name>
        <dbReference type="ChEBI" id="CHEBI:60519"/>
    </ligand>
</feature>
<feature type="binding site" description="via persulfide group" evidence="1">
    <location>
        <position position="395"/>
    </location>
    <ligand>
        <name>hybrid [4Fe-2O-2S] cluster</name>
        <dbReference type="ChEBI" id="CHEBI:60519"/>
    </ligand>
</feature>
<feature type="binding site" evidence="1">
    <location>
        <position position="423"/>
    </location>
    <ligand>
        <name>hybrid [4Fe-2O-2S] cluster</name>
        <dbReference type="ChEBI" id="CHEBI:60519"/>
    </ligand>
</feature>
<feature type="binding site" evidence="1">
    <location>
        <position position="448"/>
    </location>
    <ligand>
        <name>hybrid [4Fe-2O-2S] cluster</name>
        <dbReference type="ChEBI" id="CHEBI:60519"/>
    </ligand>
</feature>
<feature type="binding site" evidence="1">
    <location>
        <position position="482"/>
    </location>
    <ligand>
        <name>hybrid [4Fe-2O-2S] cluster</name>
        <dbReference type="ChEBI" id="CHEBI:60519"/>
    </ligand>
</feature>
<feature type="binding site" evidence="1">
    <location>
        <position position="484"/>
    </location>
    <ligand>
        <name>hybrid [4Fe-2O-2S] cluster</name>
        <dbReference type="ChEBI" id="CHEBI:60519"/>
    </ligand>
</feature>
<feature type="modified residue" description="Cysteine persulfide" evidence="1">
    <location>
        <position position="395"/>
    </location>
</feature>
<reference key="1">
    <citation type="submission" date="2008-08" db="EMBL/GenBank/DDBJ databases">
        <title>The complete genome sequence of Thermodesulfovibrio yellowstonii strain ATCC 51303 / DSM 11347 / YP87.</title>
        <authorList>
            <person name="Dodson R.J."/>
            <person name="Durkin A.S."/>
            <person name="Wu M."/>
            <person name="Eisen J."/>
            <person name="Sutton G."/>
        </authorList>
    </citation>
    <scope>NUCLEOTIDE SEQUENCE [LARGE SCALE GENOMIC DNA]</scope>
    <source>
        <strain>ATCC 51303 / DSM 11347 / YP87</strain>
    </source>
</reference>
<name>HCP_THEYD</name>
<gene>
    <name evidence="1" type="primary">hcp</name>
    <name type="ordered locus">THEYE_A0191</name>
</gene>
<accession>B5YHX5</accession>
<evidence type="ECO:0000255" key="1">
    <source>
        <dbReference type="HAMAP-Rule" id="MF_00069"/>
    </source>
</evidence>
<sequence>MFCRQCEQTANPCTKLGVCGKQPDTAYLQDLLTYALQGLATYAKEALKESSQTQNVMKRINKFTVEALFATLTNVNFDSEAIKNFIYEAVKLRDELKQMGFKVQETESCKFQPADNLQELVKQGEEANQKIFHSSSNEDVQSLKEITLYSLRGIAAYTDHAQILGQEDEKVYAFIYEALDAMQRNGDLDFWLNMVLRAGEINLRAMELLDAANTGRYGHPVPTPVPLGHKKGKAIVVSGHDLRDLELLLQQTEGKGIYVYTHGEMLPCHGYPELKKYKHFYGHYGTAWQNQQREFAQFPGAILMTTNCIIKPQESYKDRIFTTGVVGWPGVKHIKDKDFTPVIEKALELPGFTEDKEDKTVMVGFARNSVLSVADKVIELVKAGKIRHFFLVGGCDGAKPGRSYYTEFVEKTPKDTIVLTLACGKFRFFDKELGSINGIPRLLDVGQCNDAYSAIQIALALSKAFNVSINELPLSLILSWFEQKAVAILTTLLYLGIKNIRLGPTLPAFVSPNVLKVLVDNFGIKPIKTAEEDLKDILR</sequence>
<dbReference type="EC" id="1.7.99.1" evidence="1"/>
<dbReference type="EMBL" id="CP001147">
    <property type="protein sequence ID" value="ACI20730.1"/>
    <property type="molecule type" value="Genomic_DNA"/>
</dbReference>
<dbReference type="RefSeq" id="WP_012545464.1">
    <property type="nucleotide sequence ID" value="NC_011296.1"/>
</dbReference>
<dbReference type="RefSeq" id="YP_002248041.1">
    <property type="nucleotide sequence ID" value="NC_011296.1"/>
</dbReference>
<dbReference type="SMR" id="B5YHX5"/>
<dbReference type="FunCoup" id="B5YHX5">
    <property type="interactions" value="51"/>
</dbReference>
<dbReference type="STRING" id="289376.THEYE_A0191"/>
<dbReference type="EnsemblBacteria" id="ACI20730">
    <property type="protein sequence ID" value="ACI20730"/>
    <property type="gene ID" value="THEYE_A0191"/>
</dbReference>
<dbReference type="KEGG" id="tye:THEYE_A0191"/>
<dbReference type="PATRIC" id="fig|289376.4.peg.188"/>
<dbReference type="eggNOG" id="COG1151">
    <property type="taxonomic scope" value="Bacteria"/>
</dbReference>
<dbReference type="HOGENOM" id="CLU_038344_2_0_0"/>
<dbReference type="InParanoid" id="B5YHX5"/>
<dbReference type="OrthoDB" id="9761526at2"/>
<dbReference type="Proteomes" id="UP000000718">
    <property type="component" value="Chromosome"/>
</dbReference>
<dbReference type="GO" id="GO:0005737">
    <property type="term" value="C:cytoplasm"/>
    <property type="evidence" value="ECO:0007669"/>
    <property type="project" value="UniProtKB-SubCell"/>
</dbReference>
<dbReference type="GO" id="GO:0051539">
    <property type="term" value="F:4 iron, 4 sulfur cluster binding"/>
    <property type="evidence" value="ECO:0007669"/>
    <property type="project" value="UniProtKB-KW"/>
</dbReference>
<dbReference type="GO" id="GO:0050418">
    <property type="term" value="F:hydroxylamine reductase activity"/>
    <property type="evidence" value="ECO:0000318"/>
    <property type="project" value="GO_Central"/>
</dbReference>
<dbReference type="GO" id="GO:0046872">
    <property type="term" value="F:metal ion binding"/>
    <property type="evidence" value="ECO:0007669"/>
    <property type="project" value="UniProtKB-KW"/>
</dbReference>
<dbReference type="GO" id="GO:0004601">
    <property type="term" value="F:peroxidase activity"/>
    <property type="evidence" value="ECO:0000318"/>
    <property type="project" value="GO_Central"/>
</dbReference>
<dbReference type="GO" id="GO:0046210">
    <property type="term" value="P:nitric oxide catabolic process"/>
    <property type="evidence" value="ECO:0000318"/>
    <property type="project" value="GO_Central"/>
</dbReference>
<dbReference type="GO" id="GO:0042542">
    <property type="term" value="P:response to hydrogen peroxide"/>
    <property type="evidence" value="ECO:0000318"/>
    <property type="project" value="GO_Central"/>
</dbReference>
<dbReference type="CDD" id="cd01914">
    <property type="entry name" value="HCP"/>
    <property type="match status" value="1"/>
</dbReference>
<dbReference type="FunFam" id="1.20.1270.20:FF:000001">
    <property type="entry name" value="Hydroxylamine reductase"/>
    <property type="match status" value="1"/>
</dbReference>
<dbReference type="FunFam" id="1.20.1270.20:FF:000002">
    <property type="entry name" value="Hydroxylamine reductase"/>
    <property type="match status" value="1"/>
</dbReference>
<dbReference type="FunFam" id="3.40.50.2030:FF:000001">
    <property type="entry name" value="Hydroxylamine reductase"/>
    <property type="match status" value="1"/>
</dbReference>
<dbReference type="FunFam" id="3.40.50.2030:FF:000002">
    <property type="entry name" value="Hydroxylamine reductase"/>
    <property type="match status" value="1"/>
</dbReference>
<dbReference type="Gene3D" id="1.20.1270.20">
    <property type="match status" value="2"/>
</dbReference>
<dbReference type="Gene3D" id="3.40.50.2030">
    <property type="match status" value="2"/>
</dbReference>
<dbReference type="HAMAP" id="MF_00069">
    <property type="entry name" value="Hydroxylam_reduct"/>
    <property type="match status" value="1"/>
</dbReference>
<dbReference type="InterPro" id="IPR004137">
    <property type="entry name" value="HCP/CODH"/>
</dbReference>
<dbReference type="InterPro" id="IPR010048">
    <property type="entry name" value="Hydroxylam_reduct"/>
</dbReference>
<dbReference type="InterPro" id="IPR016099">
    <property type="entry name" value="Prismane-like_a/b-sand"/>
</dbReference>
<dbReference type="InterPro" id="IPR011254">
    <property type="entry name" value="Prismane-like_sf"/>
</dbReference>
<dbReference type="InterPro" id="IPR016100">
    <property type="entry name" value="Prismane_a-bundle"/>
</dbReference>
<dbReference type="NCBIfam" id="TIGR01703">
    <property type="entry name" value="hybrid_clust"/>
    <property type="match status" value="1"/>
</dbReference>
<dbReference type="NCBIfam" id="NF003658">
    <property type="entry name" value="PRK05290.1"/>
    <property type="match status" value="1"/>
</dbReference>
<dbReference type="PANTHER" id="PTHR30109">
    <property type="entry name" value="HYDROXYLAMINE REDUCTASE"/>
    <property type="match status" value="1"/>
</dbReference>
<dbReference type="PANTHER" id="PTHR30109:SF0">
    <property type="entry name" value="HYDROXYLAMINE REDUCTASE"/>
    <property type="match status" value="1"/>
</dbReference>
<dbReference type="Pfam" id="PF03063">
    <property type="entry name" value="Prismane"/>
    <property type="match status" value="1"/>
</dbReference>
<dbReference type="PIRSF" id="PIRSF000076">
    <property type="entry name" value="HCP"/>
    <property type="match status" value="1"/>
</dbReference>
<dbReference type="SUPFAM" id="SSF56821">
    <property type="entry name" value="Prismane protein-like"/>
    <property type="match status" value="1"/>
</dbReference>
<keyword id="KW-0004">4Fe-4S</keyword>
<keyword id="KW-0963">Cytoplasm</keyword>
<keyword id="KW-0408">Iron</keyword>
<keyword id="KW-0411">Iron-sulfur</keyword>
<keyword id="KW-0479">Metal-binding</keyword>
<keyword id="KW-0560">Oxidoreductase</keyword>
<keyword id="KW-1185">Reference proteome</keyword>
<protein>
    <recommendedName>
        <fullName evidence="1">Hydroxylamine reductase</fullName>
        <ecNumber evidence="1">1.7.99.1</ecNumber>
    </recommendedName>
    <alternativeName>
        <fullName evidence="1">Hybrid-cluster protein</fullName>
        <shortName evidence="1">HCP</shortName>
    </alternativeName>
    <alternativeName>
        <fullName evidence="1">Prismane protein</fullName>
    </alternativeName>
</protein>